<proteinExistence type="inferred from homology"/>
<sequence length="274" mass="29640">MEALRQRIEAAFEARAEITPATVEPSVRADVEKAIAMLDTGEARVAEKINGEWHVHQWLKKAVLLSFRIFDNGVIEGAETKYFDKVPMKFADYDEARFRKEAIRVVPPAAVRKGSFIGKNTVLMPSYVNLGAFVDEGTMVDTWATVGSCAQIGKNVHLSGGVGIGGVLEPLQAGPTIIEDNCFIGARSEIVEGVIVEEGSVISMGVYIGQSTRIFDRETGEVHYGRVPAGSVVVAGNLPSKCGTYSLYAAIIVKKVDAKTRGKVGINELLRIVD</sequence>
<feature type="chain" id="PRO_1000083759" description="2,3,4,5-tetrahydropyridine-2,6-dicarboxylate N-succinyltransferase">
    <location>
        <begin position="1"/>
        <end position="274"/>
    </location>
</feature>
<feature type="binding site" evidence="1">
    <location>
        <position position="104"/>
    </location>
    <ligand>
        <name>substrate</name>
    </ligand>
</feature>
<feature type="binding site" evidence="1">
    <location>
        <position position="141"/>
    </location>
    <ligand>
        <name>substrate</name>
    </ligand>
</feature>
<organism>
    <name type="scientific">Shewanella pealeana (strain ATCC 700345 / ANG-SQ1)</name>
    <dbReference type="NCBI Taxonomy" id="398579"/>
    <lineage>
        <taxon>Bacteria</taxon>
        <taxon>Pseudomonadati</taxon>
        <taxon>Pseudomonadota</taxon>
        <taxon>Gammaproteobacteria</taxon>
        <taxon>Alteromonadales</taxon>
        <taxon>Shewanellaceae</taxon>
        <taxon>Shewanella</taxon>
    </lineage>
</organism>
<protein>
    <recommendedName>
        <fullName evidence="1">2,3,4,5-tetrahydropyridine-2,6-dicarboxylate N-succinyltransferase</fullName>
        <ecNumber evidence="1">2.3.1.117</ecNumber>
    </recommendedName>
    <alternativeName>
        <fullName evidence="1">Tetrahydrodipicolinate N-succinyltransferase</fullName>
        <shortName evidence="1">THDP succinyltransferase</shortName>
        <shortName evidence="1">THP succinyltransferase</shortName>
        <shortName evidence="1">Tetrahydropicolinate succinylase</shortName>
    </alternativeName>
</protein>
<dbReference type="EC" id="2.3.1.117" evidence="1"/>
<dbReference type="EMBL" id="CP000851">
    <property type="protein sequence ID" value="ABV88206.1"/>
    <property type="molecule type" value="Genomic_DNA"/>
</dbReference>
<dbReference type="RefSeq" id="WP_012156111.1">
    <property type="nucleotide sequence ID" value="NC_009901.1"/>
</dbReference>
<dbReference type="SMR" id="A8H6L9"/>
<dbReference type="STRING" id="398579.Spea_2888"/>
<dbReference type="KEGG" id="spl:Spea_2888"/>
<dbReference type="eggNOG" id="COG2171">
    <property type="taxonomic scope" value="Bacteria"/>
</dbReference>
<dbReference type="HOGENOM" id="CLU_050859_0_1_6"/>
<dbReference type="OrthoDB" id="9775362at2"/>
<dbReference type="UniPathway" id="UPA00034">
    <property type="reaction ID" value="UER00019"/>
</dbReference>
<dbReference type="Proteomes" id="UP000002608">
    <property type="component" value="Chromosome"/>
</dbReference>
<dbReference type="GO" id="GO:0005737">
    <property type="term" value="C:cytoplasm"/>
    <property type="evidence" value="ECO:0007669"/>
    <property type="project" value="UniProtKB-SubCell"/>
</dbReference>
<dbReference type="GO" id="GO:0008666">
    <property type="term" value="F:2,3,4,5-tetrahydropyridine-2,6-dicarboxylate N-succinyltransferase activity"/>
    <property type="evidence" value="ECO:0007669"/>
    <property type="project" value="UniProtKB-UniRule"/>
</dbReference>
<dbReference type="GO" id="GO:0016779">
    <property type="term" value="F:nucleotidyltransferase activity"/>
    <property type="evidence" value="ECO:0007669"/>
    <property type="project" value="TreeGrafter"/>
</dbReference>
<dbReference type="GO" id="GO:0019877">
    <property type="term" value="P:diaminopimelate biosynthetic process"/>
    <property type="evidence" value="ECO:0007669"/>
    <property type="project" value="UniProtKB-UniRule"/>
</dbReference>
<dbReference type="GO" id="GO:0009089">
    <property type="term" value="P:lysine biosynthetic process via diaminopimelate"/>
    <property type="evidence" value="ECO:0007669"/>
    <property type="project" value="UniProtKB-UniRule"/>
</dbReference>
<dbReference type="CDD" id="cd03350">
    <property type="entry name" value="LbH_THP_succinylT"/>
    <property type="match status" value="1"/>
</dbReference>
<dbReference type="Gene3D" id="2.160.10.10">
    <property type="entry name" value="Hexapeptide repeat proteins"/>
    <property type="match status" value="1"/>
</dbReference>
<dbReference type="Gene3D" id="1.10.166.10">
    <property type="entry name" value="Tetrahydrodipicolinate-N-succinyltransferase, N-terminal domain"/>
    <property type="match status" value="1"/>
</dbReference>
<dbReference type="HAMAP" id="MF_00811">
    <property type="entry name" value="DapD"/>
    <property type="match status" value="1"/>
</dbReference>
<dbReference type="InterPro" id="IPR005664">
    <property type="entry name" value="DapD_Trfase_Hexpep_rpt_fam"/>
</dbReference>
<dbReference type="InterPro" id="IPR001451">
    <property type="entry name" value="Hexapep"/>
</dbReference>
<dbReference type="InterPro" id="IPR018357">
    <property type="entry name" value="Hexapep_transf_CS"/>
</dbReference>
<dbReference type="InterPro" id="IPR023180">
    <property type="entry name" value="THP_succinylTrfase_dom1"/>
</dbReference>
<dbReference type="InterPro" id="IPR037133">
    <property type="entry name" value="THP_succinylTrfase_N_sf"/>
</dbReference>
<dbReference type="InterPro" id="IPR011004">
    <property type="entry name" value="Trimer_LpxA-like_sf"/>
</dbReference>
<dbReference type="NCBIfam" id="TIGR00965">
    <property type="entry name" value="dapD"/>
    <property type="match status" value="1"/>
</dbReference>
<dbReference type="NCBIfam" id="NF008808">
    <property type="entry name" value="PRK11830.1"/>
    <property type="match status" value="1"/>
</dbReference>
<dbReference type="PANTHER" id="PTHR19136:SF52">
    <property type="entry name" value="2,3,4,5-TETRAHYDROPYRIDINE-2,6-DICARBOXYLATE N-SUCCINYLTRANSFERASE"/>
    <property type="match status" value="1"/>
</dbReference>
<dbReference type="PANTHER" id="PTHR19136">
    <property type="entry name" value="MOLYBDENUM COFACTOR GUANYLYLTRANSFERASE"/>
    <property type="match status" value="1"/>
</dbReference>
<dbReference type="Pfam" id="PF14602">
    <property type="entry name" value="Hexapep_2"/>
    <property type="match status" value="1"/>
</dbReference>
<dbReference type="Pfam" id="PF14805">
    <property type="entry name" value="THDPS_N_2"/>
    <property type="match status" value="1"/>
</dbReference>
<dbReference type="SUPFAM" id="SSF51161">
    <property type="entry name" value="Trimeric LpxA-like enzymes"/>
    <property type="match status" value="1"/>
</dbReference>
<dbReference type="PROSITE" id="PS00101">
    <property type="entry name" value="HEXAPEP_TRANSFERASES"/>
    <property type="match status" value="1"/>
</dbReference>
<reference key="1">
    <citation type="submission" date="2007-10" db="EMBL/GenBank/DDBJ databases">
        <title>Complete sequence of Shewanella pealeana ATCC 700345.</title>
        <authorList>
            <consortium name="US DOE Joint Genome Institute"/>
            <person name="Copeland A."/>
            <person name="Lucas S."/>
            <person name="Lapidus A."/>
            <person name="Barry K."/>
            <person name="Glavina del Rio T."/>
            <person name="Dalin E."/>
            <person name="Tice H."/>
            <person name="Pitluck S."/>
            <person name="Chertkov O."/>
            <person name="Brettin T."/>
            <person name="Bruce D."/>
            <person name="Detter J.C."/>
            <person name="Han C."/>
            <person name="Schmutz J."/>
            <person name="Larimer F."/>
            <person name="Land M."/>
            <person name="Hauser L."/>
            <person name="Kyrpides N."/>
            <person name="Kim E."/>
            <person name="Zhao J.-S.Z."/>
            <person name="Manno D."/>
            <person name="Hawari J."/>
            <person name="Richardson P."/>
        </authorList>
    </citation>
    <scope>NUCLEOTIDE SEQUENCE [LARGE SCALE GENOMIC DNA]</scope>
    <source>
        <strain>ATCC 700345 / ANG-SQ1</strain>
    </source>
</reference>
<comment type="catalytic activity">
    <reaction evidence="1">
        <text>(S)-2,3,4,5-tetrahydrodipicolinate + succinyl-CoA + H2O = (S)-2-succinylamino-6-oxoheptanedioate + CoA</text>
        <dbReference type="Rhea" id="RHEA:17325"/>
        <dbReference type="ChEBI" id="CHEBI:15377"/>
        <dbReference type="ChEBI" id="CHEBI:15685"/>
        <dbReference type="ChEBI" id="CHEBI:16845"/>
        <dbReference type="ChEBI" id="CHEBI:57287"/>
        <dbReference type="ChEBI" id="CHEBI:57292"/>
        <dbReference type="EC" id="2.3.1.117"/>
    </reaction>
</comment>
<comment type="pathway">
    <text evidence="1">Amino-acid biosynthesis; L-lysine biosynthesis via DAP pathway; LL-2,6-diaminopimelate from (S)-tetrahydrodipicolinate (succinylase route): step 1/3.</text>
</comment>
<comment type="subunit">
    <text evidence="1">Homotrimer.</text>
</comment>
<comment type="subcellular location">
    <subcellularLocation>
        <location evidence="1">Cytoplasm</location>
    </subcellularLocation>
</comment>
<comment type="similarity">
    <text evidence="1">Belongs to the transferase hexapeptide repeat family.</text>
</comment>
<evidence type="ECO:0000255" key="1">
    <source>
        <dbReference type="HAMAP-Rule" id="MF_00811"/>
    </source>
</evidence>
<gene>
    <name evidence="1" type="primary">dapD</name>
    <name type="ordered locus">Spea_2888</name>
</gene>
<keyword id="KW-0012">Acyltransferase</keyword>
<keyword id="KW-0028">Amino-acid biosynthesis</keyword>
<keyword id="KW-0963">Cytoplasm</keyword>
<keyword id="KW-0220">Diaminopimelate biosynthesis</keyword>
<keyword id="KW-0457">Lysine biosynthesis</keyword>
<keyword id="KW-1185">Reference proteome</keyword>
<keyword id="KW-0677">Repeat</keyword>
<keyword id="KW-0808">Transferase</keyword>
<accession>A8H6L9</accession>
<name>DAPD_SHEPA</name>